<feature type="chain" id="PRO_0000366240" description="Ribosomal RNA large subunit methyltransferase I">
    <location>
        <begin position="1"/>
        <end position="403"/>
    </location>
</feature>
<feature type="domain" description="PUA" evidence="1">
    <location>
        <begin position="9"/>
        <end position="88"/>
    </location>
</feature>
<organism>
    <name type="scientific">Salmonella arizonae (strain ATCC BAA-731 / CDC346-86 / RSK2980)</name>
    <dbReference type="NCBI Taxonomy" id="41514"/>
    <lineage>
        <taxon>Bacteria</taxon>
        <taxon>Pseudomonadati</taxon>
        <taxon>Pseudomonadota</taxon>
        <taxon>Gammaproteobacteria</taxon>
        <taxon>Enterobacterales</taxon>
        <taxon>Enterobacteriaceae</taxon>
        <taxon>Salmonella</taxon>
    </lineage>
</organism>
<dbReference type="EC" id="2.1.1.191" evidence="1"/>
<dbReference type="EMBL" id="CP000880">
    <property type="protein sequence ID" value="ABX21812.1"/>
    <property type="molecule type" value="Genomic_DNA"/>
</dbReference>
<dbReference type="SMR" id="A9MHS2"/>
<dbReference type="STRING" id="41514.SARI_01930"/>
<dbReference type="KEGG" id="ses:SARI_01930"/>
<dbReference type="HOGENOM" id="CLU_014042_0_0_6"/>
<dbReference type="Proteomes" id="UP000002084">
    <property type="component" value="Chromosome"/>
</dbReference>
<dbReference type="GO" id="GO:0005737">
    <property type="term" value="C:cytoplasm"/>
    <property type="evidence" value="ECO:0007669"/>
    <property type="project" value="UniProtKB-SubCell"/>
</dbReference>
<dbReference type="GO" id="GO:0003723">
    <property type="term" value="F:RNA binding"/>
    <property type="evidence" value="ECO:0007669"/>
    <property type="project" value="UniProtKB-KW"/>
</dbReference>
<dbReference type="GO" id="GO:0016434">
    <property type="term" value="F:rRNA (cytosine) methyltransferase activity"/>
    <property type="evidence" value="ECO:0007669"/>
    <property type="project" value="UniProtKB-UniRule"/>
</dbReference>
<dbReference type="CDD" id="cd02440">
    <property type="entry name" value="AdoMet_MTases"/>
    <property type="match status" value="1"/>
</dbReference>
<dbReference type="CDD" id="cd21153">
    <property type="entry name" value="PUA_RlmI"/>
    <property type="match status" value="1"/>
</dbReference>
<dbReference type="CDD" id="cd11572">
    <property type="entry name" value="RlmI_M_like"/>
    <property type="match status" value="1"/>
</dbReference>
<dbReference type="FunFam" id="3.40.50.150:FF:000044">
    <property type="entry name" value="Ribosomal RNA large subunit methyltransferase I"/>
    <property type="match status" value="1"/>
</dbReference>
<dbReference type="Gene3D" id="2.30.130.10">
    <property type="entry name" value="PUA domain"/>
    <property type="match status" value="1"/>
</dbReference>
<dbReference type="Gene3D" id="3.30.750.80">
    <property type="entry name" value="RNA methyltransferase domain (HRMD) like"/>
    <property type="match status" value="1"/>
</dbReference>
<dbReference type="Gene3D" id="3.40.50.150">
    <property type="entry name" value="Vaccinia Virus protein VP39"/>
    <property type="match status" value="1"/>
</dbReference>
<dbReference type="HAMAP" id="MF_01857">
    <property type="entry name" value="23SrRNA_methyltr_I"/>
    <property type="match status" value="1"/>
</dbReference>
<dbReference type="InterPro" id="IPR002478">
    <property type="entry name" value="PUA"/>
</dbReference>
<dbReference type="InterPro" id="IPR015947">
    <property type="entry name" value="PUA-like_sf"/>
</dbReference>
<dbReference type="InterPro" id="IPR036974">
    <property type="entry name" value="PUA_sf"/>
</dbReference>
<dbReference type="InterPro" id="IPR023542">
    <property type="entry name" value="RLMI"/>
</dbReference>
<dbReference type="InterPro" id="IPR041532">
    <property type="entry name" value="RlmI-like_PUA"/>
</dbReference>
<dbReference type="InterPro" id="IPR019614">
    <property type="entry name" value="SAM-dep_methyl-trfase"/>
</dbReference>
<dbReference type="InterPro" id="IPR029063">
    <property type="entry name" value="SAM-dependent_MTases_sf"/>
</dbReference>
<dbReference type="NCBIfam" id="NF011707">
    <property type="entry name" value="PRK15128.1"/>
    <property type="match status" value="1"/>
</dbReference>
<dbReference type="PANTHER" id="PTHR42873">
    <property type="entry name" value="RIBOSOMAL RNA LARGE SUBUNIT METHYLTRANSFERASE"/>
    <property type="match status" value="1"/>
</dbReference>
<dbReference type="PANTHER" id="PTHR42873:SF1">
    <property type="entry name" value="S-ADENOSYLMETHIONINE-DEPENDENT METHYLTRANSFERASE DOMAIN-CONTAINING PROTEIN"/>
    <property type="match status" value="1"/>
</dbReference>
<dbReference type="Pfam" id="PF10672">
    <property type="entry name" value="Methyltrans_SAM"/>
    <property type="match status" value="1"/>
</dbReference>
<dbReference type="Pfam" id="PF17785">
    <property type="entry name" value="PUA_3"/>
    <property type="match status" value="1"/>
</dbReference>
<dbReference type="SMART" id="SM00359">
    <property type="entry name" value="PUA"/>
    <property type="match status" value="1"/>
</dbReference>
<dbReference type="SUPFAM" id="SSF88697">
    <property type="entry name" value="PUA domain-like"/>
    <property type="match status" value="1"/>
</dbReference>
<dbReference type="SUPFAM" id="SSF53335">
    <property type="entry name" value="S-adenosyl-L-methionine-dependent methyltransferases"/>
    <property type="match status" value="1"/>
</dbReference>
<dbReference type="PROSITE" id="PS50890">
    <property type="entry name" value="PUA"/>
    <property type="match status" value="1"/>
</dbReference>
<reference key="1">
    <citation type="submission" date="2007-11" db="EMBL/GenBank/DDBJ databases">
        <authorList>
            <consortium name="The Salmonella enterica serovar Arizonae Genome Sequencing Project"/>
            <person name="McClelland M."/>
            <person name="Sanderson E.K."/>
            <person name="Porwollik S."/>
            <person name="Spieth J."/>
            <person name="Clifton W.S."/>
            <person name="Fulton R."/>
            <person name="Chunyan W."/>
            <person name="Wollam A."/>
            <person name="Shah N."/>
            <person name="Pepin K."/>
            <person name="Bhonagiri V."/>
            <person name="Nash W."/>
            <person name="Johnson M."/>
            <person name="Thiruvilangam P."/>
            <person name="Wilson R."/>
        </authorList>
    </citation>
    <scope>NUCLEOTIDE SEQUENCE [LARGE SCALE GENOMIC DNA]</scope>
    <source>
        <strain>ATCC BAA-731 / CDC346-86 / RSK2980</strain>
    </source>
</reference>
<evidence type="ECO:0000255" key="1">
    <source>
        <dbReference type="HAMAP-Rule" id="MF_01857"/>
    </source>
</evidence>
<protein>
    <recommendedName>
        <fullName evidence="1">Ribosomal RNA large subunit methyltransferase I</fullName>
        <ecNumber evidence="1">2.1.1.191</ecNumber>
    </recommendedName>
    <alternativeName>
        <fullName evidence="1">23S rRNA m5C1962 methyltransferase</fullName>
    </alternativeName>
    <alternativeName>
        <fullName evidence="1">rRNA (cytosine-C(5)-)-methyltransferase RlmI</fullName>
    </alternativeName>
</protein>
<proteinExistence type="inferred from homology"/>
<keyword id="KW-0963">Cytoplasm</keyword>
<keyword id="KW-0489">Methyltransferase</keyword>
<keyword id="KW-1185">Reference proteome</keyword>
<keyword id="KW-0694">RNA-binding</keyword>
<keyword id="KW-0698">rRNA processing</keyword>
<keyword id="KW-0949">S-adenosyl-L-methionine</keyword>
<keyword id="KW-0808">Transferase</keyword>
<name>RLMI_SALAR</name>
<gene>
    <name evidence="1" type="primary">rlmI</name>
    <name type="ordered locus">SARI_01930</name>
</gene>
<sequence length="403" mass="45170">MTESTFPNYPRLVLSKGREKSLLRRHPWVFSGAVSRLEGKANPGETIDIVDHQGKWLARGAWSPASQIRARVWTFDKTEPVDIAFFTRRLRQAQHWRDWLAKKDGLDSYRLIAGESDGLPGVTIDRFGHFLVLQLLSAGAEYQRAALISALQTCYPDCAIYDRSDVAVRKKEGMALAQGPVTGELPPALLPIEEHGMKLLVDIQGGHKTGYYLDQRDSRLATRRYVENQRVLNCFSYTGGFAVSALMGGCRQVVSVDTSQDALDIARQNVELNQLDLSKAEFVRDDVFKLLRAYRERGEKFDVIIMDPPKFVENKSQLMGACRGYKDINMLAIQLLNPGGILLTFSCSGLMTSDLFQKIIADAAIDAGRDVQFIEQFRQAADHPVIATYPEGLYLKGFACRVM</sequence>
<accession>A9MHS2</accession>
<comment type="function">
    <text evidence="1">Specifically methylates the cytosine at position 1962 (m5C1962) of 23S rRNA.</text>
</comment>
<comment type="catalytic activity">
    <reaction evidence="1">
        <text>cytidine(1962) in 23S rRNA + S-adenosyl-L-methionine = 5-methylcytidine(1962) in 23S rRNA + S-adenosyl-L-homocysteine + H(+)</text>
        <dbReference type="Rhea" id="RHEA:42912"/>
        <dbReference type="Rhea" id="RHEA-COMP:10382"/>
        <dbReference type="Rhea" id="RHEA-COMP:10386"/>
        <dbReference type="ChEBI" id="CHEBI:15378"/>
        <dbReference type="ChEBI" id="CHEBI:57856"/>
        <dbReference type="ChEBI" id="CHEBI:59789"/>
        <dbReference type="ChEBI" id="CHEBI:74483"/>
        <dbReference type="ChEBI" id="CHEBI:82748"/>
        <dbReference type="EC" id="2.1.1.191"/>
    </reaction>
</comment>
<comment type="subcellular location">
    <subcellularLocation>
        <location evidence="1">Cytoplasm</location>
    </subcellularLocation>
</comment>
<comment type="similarity">
    <text evidence="1">Belongs to the methyltransferase superfamily. RlmI family.</text>
</comment>